<proteinExistence type="inferred from homology"/>
<keyword id="KW-0408">Iron</keyword>
<keyword id="KW-0411">Iron-sulfur</keyword>
<keyword id="KW-0479">Metal-binding</keyword>
<dbReference type="EMBL" id="CP001011">
    <property type="protein sequence ID" value="ACB93167.1"/>
    <property type="molecule type" value="Genomic_DNA"/>
</dbReference>
<dbReference type="RefSeq" id="WP_010892935.1">
    <property type="nucleotide sequence ID" value="NC_010577.1"/>
</dbReference>
<dbReference type="SMR" id="B2I891"/>
<dbReference type="GeneID" id="93905503"/>
<dbReference type="KEGG" id="xfn:XfasM23_1763"/>
<dbReference type="HOGENOM" id="CLU_069054_5_3_6"/>
<dbReference type="Proteomes" id="UP000001698">
    <property type="component" value="Chromosome"/>
</dbReference>
<dbReference type="GO" id="GO:0005829">
    <property type="term" value="C:cytosol"/>
    <property type="evidence" value="ECO:0007669"/>
    <property type="project" value="TreeGrafter"/>
</dbReference>
<dbReference type="GO" id="GO:0051537">
    <property type="term" value="F:2 iron, 2 sulfur cluster binding"/>
    <property type="evidence" value="ECO:0007669"/>
    <property type="project" value="TreeGrafter"/>
</dbReference>
<dbReference type="GO" id="GO:0051539">
    <property type="term" value="F:4 iron, 4 sulfur cluster binding"/>
    <property type="evidence" value="ECO:0007669"/>
    <property type="project" value="TreeGrafter"/>
</dbReference>
<dbReference type="GO" id="GO:0005506">
    <property type="term" value="F:iron ion binding"/>
    <property type="evidence" value="ECO:0007669"/>
    <property type="project" value="UniProtKB-UniRule"/>
</dbReference>
<dbReference type="GO" id="GO:0016226">
    <property type="term" value="P:iron-sulfur cluster assembly"/>
    <property type="evidence" value="ECO:0007669"/>
    <property type="project" value="UniProtKB-UniRule"/>
</dbReference>
<dbReference type="FunFam" id="2.60.300.12:FF:000002">
    <property type="entry name" value="Iron-sulfur cluster insertion protein ErpA"/>
    <property type="match status" value="1"/>
</dbReference>
<dbReference type="Gene3D" id="2.60.300.12">
    <property type="entry name" value="HesB-like domain"/>
    <property type="match status" value="1"/>
</dbReference>
<dbReference type="HAMAP" id="MF_01380">
    <property type="entry name" value="Fe_S_insert_ErpA"/>
    <property type="match status" value="1"/>
</dbReference>
<dbReference type="InterPro" id="IPR000361">
    <property type="entry name" value="FeS_biogenesis"/>
</dbReference>
<dbReference type="InterPro" id="IPR016092">
    <property type="entry name" value="FeS_cluster_insertion"/>
</dbReference>
<dbReference type="InterPro" id="IPR017870">
    <property type="entry name" value="FeS_cluster_insertion_CS"/>
</dbReference>
<dbReference type="InterPro" id="IPR023063">
    <property type="entry name" value="FeS_cluster_insertion_RrpA"/>
</dbReference>
<dbReference type="InterPro" id="IPR035903">
    <property type="entry name" value="HesB-like_dom_sf"/>
</dbReference>
<dbReference type="NCBIfam" id="TIGR00049">
    <property type="entry name" value="iron-sulfur cluster assembly accessory protein"/>
    <property type="match status" value="1"/>
</dbReference>
<dbReference type="NCBIfam" id="NF010147">
    <property type="entry name" value="PRK13623.1"/>
    <property type="match status" value="1"/>
</dbReference>
<dbReference type="PANTHER" id="PTHR43011">
    <property type="entry name" value="IRON-SULFUR CLUSTER ASSEMBLY 2 HOMOLOG, MITOCHONDRIAL"/>
    <property type="match status" value="1"/>
</dbReference>
<dbReference type="PANTHER" id="PTHR43011:SF1">
    <property type="entry name" value="IRON-SULFUR CLUSTER ASSEMBLY 2 HOMOLOG, MITOCHONDRIAL"/>
    <property type="match status" value="1"/>
</dbReference>
<dbReference type="Pfam" id="PF01521">
    <property type="entry name" value="Fe-S_biosyn"/>
    <property type="match status" value="1"/>
</dbReference>
<dbReference type="SUPFAM" id="SSF89360">
    <property type="entry name" value="HesB-like domain"/>
    <property type="match status" value="1"/>
</dbReference>
<dbReference type="PROSITE" id="PS01152">
    <property type="entry name" value="HESB"/>
    <property type="match status" value="1"/>
</dbReference>
<protein>
    <recommendedName>
        <fullName evidence="1">Iron-sulfur cluster insertion protein ErpA</fullName>
    </recommendedName>
</protein>
<sequence>MTMLISLPTAPSVPNYQSLERPLNFTMAAAAKVRELIQEENNADLALRVYIQGGGCSGFQYGFEFDENRADDDLALETDGVVLLVDPLSLQYLLGAEVDYTESLTGAKFVIRNPNAKTTCGCGSSFSV</sequence>
<accession>B2I891</accession>
<organism>
    <name type="scientific">Xylella fastidiosa (strain M23)</name>
    <dbReference type="NCBI Taxonomy" id="405441"/>
    <lineage>
        <taxon>Bacteria</taxon>
        <taxon>Pseudomonadati</taxon>
        <taxon>Pseudomonadota</taxon>
        <taxon>Gammaproteobacteria</taxon>
        <taxon>Lysobacterales</taxon>
        <taxon>Lysobacteraceae</taxon>
        <taxon>Xylella</taxon>
    </lineage>
</organism>
<name>ERPA_XYLF2</name>
<gene>
    <name evidence="1" type="primary">erpA</name>
    <name type="ordered locus">XfasM23_1763</name>
</gene>
<reference key="1">
    <citation type="journal article" date="2010" name="J. Bacteriol.">
        <title>Whole genome sequences of two Xylella fastidiosa strains (M12 and M23) causing almond leaf scorch disease in California.</title>
        <authorList>
            <person name="Chen J."/>
            <person name="Xie G."/>
            <person name="Han S."/>
            <person name="Chertkov O."/>
            <person name="Sims D."/>
            <person name="Civerolo E.L."/>
        </authorList>
    </citation>
    <scope>NUCLEOTIDE SEQUENCE [LARGE SCALE GENOMIC DNA]</scope>
    <source>
        <strain>M23</strain>
    </source>
</reference>
<evidence type="ECO:0000255" key="1">
    <source>
        <dbReference type="HAMAP-Rule" id="MF_01380"/>
    </source>
</evidence>
<comment type="function">
    <text evidence="1">Required for insertion of 4Fe-4S clusters for at least IspG.</text>
</comment>
<comment type="cofactor">
    <cofactor evidence="1">
        <name>iron-sulfur cluster</name>
        <dbReference type="ChEBI" id="CHEBI:30408"/>
    </cofactor>
    <text evidence="1">Binds 1 iron-sulfur cluster per subunit.</text>
</comment>
<comment type="subunit">
    <text evidence="1">Homodimer.</text>
</comment>
<comment type="similarity">
    <text evidence="1">Belongs to the HesB/IscA family.</text>
</comment>
<feature type="chain" id="PRO_1000144943" description="Iron-sulfur cluster insertion protein ErpA">
    <location>
        <begin position="1"/>
        <end position="128"/>
    </location>
</feature>
<feature type="binding site" evidence="1">
    <location>
        <position position="56"/>
    </location>
    <ligand>
        <name>iron-sulfur cluster</name>
        <dbReference type="ChEBI" id="CHEBI:30408"/>
    </ligand>
</feature>
<feature type="binding site" evidence="1">
    <location>
        <position position="120"/>
    </location>
    <ligand>
        <name>iron-sulfur cluster</name>
        <dbReference type="ChEBI" id="CHEBI:30408"/>
    </ligand>
</feature>
<feature type="binding site" evidence="1">
    <location>
        <position position="122"/>
    </location>
    <ligand>
        <name>iron-sulfur cluster</name>
        <dbReference type="ChEBI" id="CHEBI:30408"/>
    </ligand>
</feature>